<reference key="1">
    <citation type="journal article" date="1999" name="Genomics">
        <title>Two novel human RAB genes with near identical sequence each map to a telomere-associated region: the subtelomeric region of 22q13.3 and the ancestral telomere band 2q13.</title>
        <authorList>
            <person name="Wong A.C."/>
            <person name="Shkolny D."/>
            <person name="Dorman A."/>
            <person name="Willingham D."/>
            <person name="Roe B.A."/>
            <person name="McDermid H.E."/>
        </authorList>
    </citation>
    <scope>NUCLEOTIDE SEQUENCE [MRNA] (ISOFORM 1)</scope>
</reference>
<reference key="2">
    <citation type="journal article" date="2005" name="Nature">
        <title>Generation and annotation of the DNA sequences of human chromosomes 2 and 4.</title>
        <authorList>
            <person name="Hillier L.W."/>
            <person name="Graves T.A."/>
            <person name="Fulton R.S."/>
            <person name="Fulton L.A."/>
            <person name="Pepin K.H."/>
            <person name="Minx P."/>
            <person name="Wagner-McPherson C."/>
            <person name="Layman D."/>
            <person name="Wylie K."/>
            <person name="Sekhon M."/>
            <person name="Becker M.C."/>
            <person name="Fewell G.A."/>
            <person name="Delehaunty K.D."/>
            <person name="Miner T.L."/>
            <person name="Nash W.E."/>
            <person name="Kremitzki C."/>
            <person name="Oddy L."/>
            <person name="Du H."/>
            <person name="Sun H."/>
            <person name="Bradshaw-Cordum H."/>
            <person name="Ali J."/>
            <person name="Carter J."/>
            <person name="Cordes M."/>
            <person name="Harris A."/>
            <person name="Isak A."/>
            <person name="van Brunt A."/>
            <person name="Nguyen C."/>
            <person name="Du F."/>
            <person name="Courtney L."/>
            <person name="Kalicki J."/>
            <person name="Ozersky P."/>
            <person name="Abbott S."/>
            <person name="Armstrong J."/>
            <person name="Belter E.A."/>
            <person name="Caruso L."/>
            <person name="Cedroni M."/>
            <person name="Cotton M."/>
            <person name="Davidson T."/>
            <person name="Desai A."/>
            <person name="Elliott G."/>
            <person name="Erb T."/>
            <person name="Fronick C."/>
            <person name="Gaige T."/>
            <person name="Haakenson W."/>
            <person name="Haglund K."/>
            <person name="Holmes A."/>
            <person name="Harkins R."/>
            <person name="Kim K."/>
            <person name="Kruchowski S.S."/>
            <person name="Strong C.M."/>
            <person name="Grewal N."/>
            <person name="Goyea E."/>
            <person name="Hou S."/>
            <person name="Levy A."/>
            <person name="Martinka S."/>
            <person name="Mead K."/>
            <person name="McLellan M.D."/>
            <person name="Meyer R."/>
            <person name="Randall-Maher J."/>
            <person name="Tomlinson C."/>
            <person name="Dauphin-Kohlberg S."/>
            <person name="Kozlowicz-Reilly A."/>
            <person name="Shah N."/>
            <person name="Swearengen-Shahid S."/>
            <person name="Snider J."/>
            <person name="Strong J.T."/>
            <person name="Thompson J."/>
            <person name="Yoakum M."/>
            <person name="Leonard S."/>
            <person name="Pearman C."/>
            <person name="Trani L."/>
            <person name="Radionenko M."/>
            <person name="Waligorski J.E."/>
            <person name="Wang C."/>
            <person name="Rock S.M."/>
            <person name="Tin-Wollam A.-M."/>
            <person name="Maupin R."/>
            <person name="Latreille P."/>
            <person name="Wendl M.C."/>
            <person name="Yang S.-P."/>
            <person name="Pohl C."/>
            <person name="Wallis J.W."/>
            <person name="Spieth J."/>
            <person name="Bieri T.A."/>
            <person name="Berkowicz N."/>
            <person name="Nelson J.O."/>
            <person name="Osborne J."/>
            <person name="Ding L."/>
            <person name="Meyer R."/>
            <person name="Sabo A."/>
            <person name="Shotland Y."/>
            <person name="Sinha P."/>
            <person name="Wohldmann P.E."/>
            <person name="Cook L.L."/>
            <person name="Hickenbotham M.T."/>
            <person name="Eldred J."/>
            <person name="Williams D."/>
            <person name="Jones T.A."/>
            <person name="She X."/>
            <person name="Ciccarelli F.D."/>
            <person name="Izaurralde E."/>
            <person name="Taylor J."/>
            <person name="Schmutz J."/>
            <person name="Myers R.M."/>
            <person name="Cox D.R."/>
            <person name="Huang X."/>
            <person name="McPherson J.D."/>
            <person name="Mardis E.R."/>
            <person name="Clifton S.W."/>
            <person name="Warren W.C."/>
            <person name="Chinwalla A.T."/>
            <person name="Eddy S.R."/>
            <person name="Marra M.A."/>
            <person name="Ovcharenko I."/>
            <person name="Furey T.S."/>
            <person name="Miller W."/>
            <person name="Eichler E.E."/>
            <person name="Bork P."/>
            <person name="Suyama M."/>
            <person name="Torrents D."/>
            <person name="Waterston R.H."/>
            <person name="Wilson R.K."/>
        </authorList>
    </citation>
    <scope>NUCLEOTIDE SEQUENCE [LARGE SCALE GENOMIC DNA]</scope>
</reference>
<reference key="3">
    <citation type="journal article" date="2012" name="PLoS Genet.">
        <title>RAB-like 2 has an essential role in male fertility, sperm intra-flagellar transport, and tail assembly.</title>
        <authorList>
            <person name="Lo J.C."/>
            <person name="Jamsai D."/>
            <person name="O'Connor A.E."/>
            <person name="Borg C."/>
            <person name="Clark B.J."/>
            <person name="Whisstock J.C."/>
            <person name="Field M.C."/>
            <person name="Adams V."/>
            <person name="Ishikawa T."/>
            <person name="Aitken R.J."/>
            <person name="Whittle B."/>
            <person name="Goodnow C.C."/>
            <person name="Ormandy C.J."/>
            <person name="O'Bryan M.K."/>
        </authorList>
    </citation>
    <scope>TISSUE SPECIFICITY</scope>
</reference>
<keyword id="KW-0025">Alternative splicing</keyword>
<keyword id="KW-0342">GTP-binding</keyword>
<keyword id="KW-0547">Nucleotide-binding</keyword>
<keyword id="KW-1267">Proteomics identification</keyword>
<keyword id="KW-1185">Reference proteome</keyword>
<sequence length="228" mass="26115">MAEDKTKPSELDQGKYDADDNVKIICLGDSAVGKSKLMERFLMDGFQPQQLSTYALTLYKHTATVDGKTILVDFWDTAGQERFQSMHASYYHKAHACIMVFDIQRKVTYRNLSTWYTELREFRPEIPCIVVANKIDDINVTQKSFNFAKKFSLPLYFVSAADGTNVVKLFNDAIRLAVSYKQNSQDFMDEIFQELENFSLEQEEEDVPDQEQSSSIETPSEEVASPHS</sequence>
<organism>
    <name type="scientific">Homo sapiens</name>
    <name type="common">Human</name>
    <dbReference type="NCBI Taxonomy" id="9606"/>
    <lineage>
        <taxon>Eukaryota</taxon>
        <taxon>Metazoa</taxon>
        <taxon>Chordata</taxon>
        <taxon>Craniata</taxon>
        <taxon>Vertebrata</taxon>
        <taxon>Euteleostomi</taxon>
        <taxon>Mammalia</taxon>
        <taxon>Eutheria</taxon>
        <taxon>Euarchontoglires</taxon>
        <taxon>Primates</taxon>
        <taxon>Haplorrhini</taxon>
        <taxon>Catarrhini</taxon>
        <taxon>Hominidae</taxon>
        <taxon>Homo</taxon>
    </lineage>
</organism>
<accession>Q9UBK7</accession>
<accession>B7ZBD6</accession>
<accession>Q9NU37</accession>
<dbReference type="EMBL" id="AF095350">
    <property type="protein sequence ID" value="AAD51377.1"/>
    <property type="molecule type" value="mRNA"/>
</dbReference>
<dbReference type="EMBL" id="AF095351">
    <property type="protein sequence ID" value="AAD51378.1"/>
    <property type="molecule type" value="mRNA"/>
</dbReference>
<dbReference type="EMBL" id="AL078621">
    <property type="status" value="NOT_ANNOTATED_CDS"/>
    <property type="molecule type" value="Genomic_DNA"/>
</dbReference>
<dbReference type="CCDS" id="CCDS2118.1">
    <molecule id="Q9UBK7-1"/>
</dbReference>
<dbReference type="CCDS" id="CCDS77454.1">
    <molecule id="Q9UBK7-2"/>
</dbReference>
<dbReference type="CCDS" id="CCDS77455.1">
    <molecule id="Q9UBK7-3"/>
</dbReference>
<dbReference type="RefSeq" id="NP_001293087.1">
    <molecule id="Q9UBK7-2"/>
    <property type="nucleotide sequence ID" value="NM_001306158.2"/>
</dbReference>
<dbReference type="RefSeq" id="NP_001293088.1">
    <molecule id="Q9UBK7-2"/>
    <property type="nucleotide sequence ID" value="NM_001306159.2"/>
</dbReference>
<dbReference type="RefSeq" id="NP_001293089.1">
    <molecule id="Q9UBK7-3"/>
    <property type="nucleotide sequence ID" value="NM_001306160.3"/>
</dbReference>
<dbReference type="RefSeq" id="NP_001341339.1">
    <molecule id="Q9UBK7-3"/>
    <property type="nucleotide sequence ID" value="NM_001354410.2"/>
</dbReference>
<dbReference type="RefSeq" id="NP_001341341.1">
    <molecule id="Q9UBK7-2"/>
    <property type="nucleotide sequence ID" value="NM_001354412.2"/>
</dbReference>
<dbReference type="RefSeq" id="NP_001341342.1">
    <molecule id="Q9UBK7-2"/>
    <property type="nucleotide sequence ID" value="NM_001354413.2"/>
</dbReference>
<dbReference type="RefSeq" id="NP_001341343.1">
    <molecule id="Q9UBK7-2"/>
    <property type="nucleotide sequence ID" value="NM_001354414.2"/>
</dbReference>
<dbReference type="RefSeq" id="NP_001341345.1">
    <molecule id="Q9UBK7-1"/>
    <property type="nucleotide sequence ID" value="NM_001354416.2"/>
</dbReference>
<dbReference type="RefSeq" id="NP_009013.1">
    <molecule id="Q9UBK7-1"/>
    <property type="nucleotide sequence ID" value="NM_007082.5"/>
</dbReference>
<dbReference type="RefSeq" id="NP_038198.1">
    <molecule id="Q9UBK7-1"/>
    <property type="nucleotide sequence ID" value="NM_013412.4"/>
</dbReference>
<dbReference type="RefSeq" id="XP_016858697.1">
    <property type="nucleotide sequence ID" value="XM_017003208.1"/>
</dbReference>
<dbReference type="RefSeq" id="XP_016858698.1">
    <property type="nucleotide sequence ID" value="XM_017003209.1"/>
</dbReference>
<dbReference type="RefSeq" id="XP_016858704.1">
    <molecule id="Q9UBK7-2"/>
    <property type="nucleotide sequence ID" value="XM_017003215.2"/>
</dbReference>
<dbReference type="RefSeq" id="XP_016858709.1">
    <molecule id="Q9UBK7-1"/>
    <property type="nucleotide sequence ID" value="XM_017003220.2"/>
</dbReference>
<dbReference type="RefSeq" id="XP_016858710.1">
    <property type="nucleotide sequence ID" value="XM_017003221.1"/>
</dbReference>
<dbReference type="RefSeq" id="XP_016858711.1">
    <property type="nucleotide sequence ID" value="XM_017003222.1"/>
</dbReference>
<dbReference type="RefSeq" id="XP_024308341.1">
    <molecule id="Q9UBK7-3"/>
    <property type="nucleotide sequence ID" value="XM_024452573.2"/>
</dbReference>
<dbReference type="RefSeq" id="XP_024308343.1">
    <molecule id="Q9UBK7-2"/>
    <property type="nucleotide sequence ID" value="XM_024452575.2"/>
</dbReference>
<dbReference type="RefSeq" id="XP_047298999.1">
    <molecule id="Q9UBK7-3"/>
    <property type="nucleotide sequence ID" value="XM_047443043.1"/>
</dbReference>
<dbReference type="RefSeq" id="XP_047299001.1">
    <molecule id="Q9UBK7-2"/>
    <property type="nucleotide sequence ID" value="XM_047443045.1"/>
</dbReference>
<dbReference type="RefSeq" id="XP_047299003.1">
    <molecule id="Q9UBK7-2"/>
    <property type="nucleotide sequence ID" value="XM_047443047.1"/>
</dbReference>
<dbReference type="RefSeq" id="XP_047299004.1">
    <molecule id="Q9UBK7-2"/>
    <property type="nucleotide sequence ID" value="XM_047443048.1"/>
</dbReference>
<dbReference type="RefSeq" id="XP_047299005.1">
    <molecule id="Q9UBK7-1"/>
    <property type="nucleotide sequence ID" value="XM_047443049.1"/>
</dbReference>
<dbReference type="RefSeq" id="XP_047299006.1">
    <molecule id="Q9UBK7-1"/>
    <property type="nucleotide sequence ID" value="XM_047443050.1"/>
</dbReference>
<dbReference type="RefSeq" id="XP_047299007.1">
    <molecule id="Q9UBK7-1"/>
    <property type="nucleotide sequence ID" value="XM_047443051.1"/>
</dbReference>
<dbReference type="RefSeq" id="XP_054196240.1">
    <molecule id="Q9UBK7-3"/>
    <property type="nucleotide sequence ID" value="XM_054340265.1"/>
</dbReference>
<dbReference type="RefSeq" id="XP_054196241.1">
    <molecule id="Q9UBK7-3"/>
    <property type="nucleotide sequence ID" value="XM_054340266.1"/>
</dbReference>
<dbReference type="RefSeq" id="XP_054196246.1">
    <molecule id="Q9UBK7-2"/>
    <property type="nucleotide sequence ID" value="XM_054340271.1"/>
</dbReference>
<dbReference type="RefSeq" id="XP_054196247.1">
    <molecule id="Q9UBK7-2"/>
    <property type="nucleotide sequence ID" value="XM_054340272.1"/>
</dbReference>
<dbReference type="RefSeq" id="XP_054196248.1">
    <molecule id="Q9UBK7-2"/>
    <property type="nucleotide sequence ID" value="XM_054340273.1"/>
</dbReference>
<dbReference type="RefSeq" id="XP_054196249.1">
    <molecule id="Q9UBK7-2"/>
    <property type="nucleotide sequence ID" value="XM_054340274.1"/>
</dbReference>
<dbReference type="RefSeq" id="XP_054196250.1">
    <molecule id="Q9UBK7-2"/>
    <property type="nucleotide sequence ID" value="XM_054340275.1"/>
</dbReference>
<dbReference type="RefSeq" id="XP_054196251.1">
    <molecule id="Q9UBK7-1"/>
    <property type="nucleotide sequence ID" value="XM_054340276.1"/>
</dbReference>
<dbReference type="RefSeq" id="XP_054196252.1">
    <molecule id="Q9UBK7-1"/>
    <property type="nucleotide sequence ID" value="XM_054340277.1"/>
</dbReference>
<dbReference type="RefSeq" id="XP_054196253.1">
    <molecule id="Q9UBK7-1"/>
    <property type="nucleotide sequence ID" value="XM_054340278.1"/>
</dbReference>
<dbReference type="RefSeq" id="XP_054196254.1">
    <molecule id="Q9UBK7-1"/>
    <property type="nucleotide sequence ID" value="XM_054340279.1"/>
</dbReference>
<dbReference type="SMR" id="Q9UBK7"/>
<dbReference type="BioGRID" id="116330">
    <property type="interactions" value="34"/>
</dbReference>
<dbReference type="FunCoup" id="Q9UBK7">
    <property type="interactions" value="1044"/>
</dbReference>
<dbReference type="IntAct" id="Q9UBK7">
    <property type="interactions" value="11"/>
</dbReference>
<dbReference type="STRING" id="9606.ENSP00000387229"/>
<dbReference type="iPTMnet" id="Q9UBK7"/>
<dbReference type="PhosphoSitePlus" id="Q9UBK7"/>
<dbReference type="BioMuta" id="RABL2A"/>
<dbReference type="DMDM" id="12643870"/>
<dbReference type="jPOST" id="Q9UBK7"/>
<dbReference type="MassIVE" id="Q9UBK7"/>
<dbReference type="PaxDb" id="9606-ENSP00000376872"/>
<dbReference type="PeptideAtlas" id="Q9UBK7"/>
<dbReference type="ProteomicsDB" id="83981">
    <molecule id="Q9UBK7-1"/>
</dbReference>
<dbReference type="ProteomicsDB" id="83982">
    <molecule id="Q9UBK7-2"/>
</dbReference>
<dbReference type="ProteomicsDB" id="83983">
    <molecule id="Q9UBK7-3"/>
</dbReference>
<dbReference type="Pumba" id="Q9UBK7"/>
<dbReference type="Antibodypedia" id="47553">
    <property type="antibodies" value="215 antibodies from 23 providers"/>
</dbReference>
<dbReference type="DNASU" id="11159"/>
<dbReference type="Ensembl" id="ENST00000393165.7">
    <molecule id="Q9UBK7-2"/>
    <property type="protein sequence ID" value="ENSP00000376870.3"/>
    <property type="gene ID" value="ENSG00000144134.19"/>
</dbReference>
<dbReference type="Ensembl" id="ENST00000393166.7">
    <molecule id="Q9UBK7-1"/>
    <property type="protein sequence ID" value="ENSP00000376871.3"/>
    <property type="gene ID" value="ENSG00000144134.19"/>
</dbReference>
<dbReference type="Ensembl" id="ENST00000393167.7">
    <molecule id="Q9UBK7-1"/>
    <property type="protein sequence ID" value="ENSP00000376872.3"/>
    <property type="gene ID" value="ENSG00000144134.19"/>
</dbReference>
<dbReference type="Ensembl" id="ENST00000409875.5">
    <molecule id="Q9UBK7-3"/>
    <property type="protein sequence ID" value="ENSP00000387229.1"/>
    <property type="gene ID" value="ENSG00000144134.19"/>
</dbReference>
<dbReference type="Ensembl" id="ENST00000683472.1">
    <molecule id="Q9UBK7-2"/>
    <property type="protein sequence ID" value="ENSP00000507832.1"/>
    <property type="gene ID" value="ENSG00000144134.19"/>
</dbReference>
<dbReference type="GeneID" id="11159"/>
<dbReference type="KEGG" id="hsa:11159"/>
<dbReference type="MANE-Select" id="ENST00000683472.1">
    <molecule id="Q9UBK7-2"/>
    <property type="protein sequence ID" value="ENSP00000507832.1"/>
    <property type="RefSeq nucleotide sequence ID" value="NM_001306158.2"/>
    <property type="RefSeq protein sequence ID" value="NP_001293087.1"/>
</dbReference>
<dbReference type="UCSC" id="uc002tkn.5">
    <molecule id="Q9UBK7-1"/>
    <property type="organism name" value="human"/>
</dbReference>
<dbReference type="AGR" id="HGNC:9799"/>
<dbReference type="CTD" id="11159"/>
<dbReference type="DisGeNET" id="11159"/>
<dbReference type="GeneCards" id="RABL2A"/>
<dbReference type="HGNC" id="HGNC:9799">
    <property type="gene designation" value="RABL2A"/>
</dbReference>
<dbReference type="HPA" id="ENSG00000144134">
    <property type="expression patterns" value="Tissue enhanced (fallopian)"/>
</dbReference>
<dbReference type="MIM" id="605412">
    <property type="type" value="gene"/>
</dbReference>
<dbReference type="neXtProt" id="NX_Q9UBK7"/>
<dbReference type="OpenTargets" id="ENSG00000144134"/>
<dbReference type="PharmGKB" id="PA34159"/>
<dbReference type="VEuPathDB" id="HostDB:ENSG00000144134"/>
<dbReference type="eggNOG" id="KOG0087">
    <property type="taxonomic scope" value="Eukaryota"/>
</dbReference>
<dbReference type="GeneTree" id="ENSGT00940000156551"/>
<dbReference type="HOGENOM" id="CLU_041217_13_1_1"/>
<dbReference type="InParanoid" id="Q9UBK7"/>
<dbReference type="OMA" id="YHEAHAC"/>
<dbReference type="OrthoDB" id="9516654at2759"/>
<dbReference type="PAN-GO" id="Q9UBK7">
    <property type="GO annotations" value="3 GO annotations based on evolutionary models"/>
</dbReference>
<dbReference type="PhylomeDB" id="Q9UBK7"/>
<dbReference type="TreeFam" id="TF329398"/>
<dbReference type="PathwayCommons" id="Q9UBK7"/>
<dbReference type="SignaLink" id="Q9UBK7"/>
<dbReference type="BioGRID-ORCS" id="11159">
    <property type="hits" value="218 hits in 1051 CRISPR screens"/>
</dbReference>
<dbReference type="ChiTaRS" id="RABL2A">
    <property type="organism name" value="human"/>
</dbReference>
<dbReference type="GenomeRNAi" id="11159"/>
<dbReference type="Pharos" id="Q9UBK7">
    <property type="development level" value="Tbio"/>
</dbReference>
<dbReference type="PRO" id="PR:Q9UBK7"/>
<dbReference type="Proteomes" id="UP000005640">
    <property type="component" value="Chromosome 2"/>
</dbReference>
<dbReference type="RNAct" id="Q9UBK7">
    <property type="molecule type" value="protein"/>
</dbReference>
<dbReference type="Bgee" id="ENSG00000144134">
    <property type="expression patterns" value="Expressed in right uterine tube and 95 other cell types or tissues"/>
</dbReference>
<dbReference type="ExpressionAtlas" id="Q9UBK7">
    <property type="expression patterns" value="baseline and differential"/>
</dbReference>
<dbReference type="GO" id="GO:0012505">
    <property type="term" value="C:endomembrane system"/>
    <property type="evidence" value="ECO:0000318"/>
    <property type="project" value="GO_Central"/>
</dbReference>
<dbReference type="GO" id="GO:0005525">
    <property type="term" value="F:GTP binding"/>
    <property type="evidence" value="ECO:0007669"/>
    <property type="project" value="UniProtKB-KW"/>
</dbReference>
<dbReference type="GO" id="GO:0003924">
    <property type="term" value="F:GTPase activity"/>
    <property type="evidence" value="ECO:0000318"/>
    <property type="project" value="GO_Central"/>
</dbReference>
<dbReference type="GO" id="GO:0006886">
    <property type="term" value="P:intracellular protein transport"/>
    <property type="evidence" value="ECO:0000318"/>
    <property type="project" value="GO_Central"/>
</dbReference>
<dbReference type="CDD" id="cd04124">
    <property type="entry name" value="RabL2"/>
    <property type="match status" value="1"/>
</dbReference>
<dbReference type="FunFam" id="3.40.50.300:FF:000986">
    <property type="entry name" value="rab-like protein 2B isoform X4"/>
    <property type="match status" value="1"/>
</dbReference>
<dbReference type="Gene3D" id="3.40.50.300">
    <property type="entry name" value="P-loop containing nucleotide triphosphate hydrolases"/>
    <property type="match status" value="1"/>
</dbReference>
<dbReference type="InterPro" id="IPR027417">
    <property type="entry name" value="P-loop_NTPase"/>
</dbReference>
<dbReference type="InterPro" id="IPR041835">
    <property type="entry name" value="RabL2"/>
</dbReference>
<dbReference type="InterPro" id="IPR005225">
    <property type="entry name" value="Small_GTP-bd"/>
</dbReference>
<dbReference type="InterPro" id="IPR001806">
    <property type="entry name" value="Small_GTPase"/>
</dbReference>
<dbReference type="NCBIfam" id="TIGR00231">
    <property type="entry name" value="small_GTP"/>
    <property type="match status" value="1"/>
</dbReference>
<dbReference type="PANTHER" id="PTHR47978">
    <property type="match status" value="1"/>
</dbReference>
<dbReference type="Pfam" id="PF00071">
    <property type="entry name" value="Ras"/>
    <property type="match status" value="1"/>
</dbReference>
<dbReference type="PRINTS" id="PR00449">
    <property type="entry name" value="RASTRNSFRMNG"/>
</dbReference>
<dbReference type="SMART" id="SM00175">
    <property type="entry name" value="RAB"/>
    <property type="match status" value="1"/>
</dbReference>
<dbReference type="SMART" id="SM00176">
    <property type="entry name" value="RAN"/>
    <property type="match status" value="1"/>
</dbReference>
<dbReference type="SMART" id="SM00173">
    <property type="entry name" value="RAS"/>
    <property type="match status" value="1"/>
</dbReference>
<dbReference type="SMART" id="SM00174">
    <property type="entry name" value="RHO"/>
    <property type="match status" value="1"/>
</dbReference>
<dbReference type="SUPFAM" id="SSF52540">
    <property type="entry name" value="P-loop containing nucleoside triphosphate hydrolases"/>
    <property type="match status" value="1"/>
</dbReference>
<dbReference type="PROSITE" id="PS51419">
    <property type="entry name" value="RAB"/>
    <property type="match status" value="1"/>
</dbReference>
<gene>
    <name type="primary">RABL2A</name>
</gene>
<protein>
    <recommendedName>
        <fullName>Rab-like protein 2A</fullName>
    </recommendedName>
</protein>
<proteinExistence type="evidence at protein level"/>
<comment type="function">
    <text evidence="2">Plays an essential role in male fertility, sperm intra-flagellar transport, and tail assembly. Binds, in a GTP-regulated manner, to a specific set of effector proteins including key proteins involved in cilia development and function and delivers them into the growing sperm tail.</text>
</comment>
<comment type="subunit">
    <text evidence="2">Interacts with IFT27, IFT81, IFT172, ATP6V1E1, HK1, LDHC, MAPRE1 and HSPA2.</text>
</comment>
<comment type="interaction">
    <interactant intactId="EBI-4402837">
        <id>Q9UBK7-2</id>
    </interactant>
    <interactant intactId="EBI-741885">
        <id>Q96LK0</id>
        <label>CEP19</label>
    </interactant>
    <organismsDiffer>false</organismsDiffer>
    <experiments>6</experiments>
</comment>
<comment type="alternative products">
    <event type="alternative splicing"/>
    <isoform>
        <id>Q9UBK7-1</id>
        <name>1</name>
        <sequence type="displayed"/>
    </isoform>
    <isoform>
        <id>Q9UBK7-2</id>
        <name>2</name>
        <sequence type="described" ref="VSP_005531"/>
    </isoform>
    <isoform>
        <id>Q9UBK7-3</id>
        <name>3</name>
        <sequence type="described" ref="VSP_041060"/>
    </isoform>
</comment>
<comment type="tissue specificity">
    <text evidence="4">Expressed in the testis.</text>
</comment>
<comment type="similarity">
    <text evidence="5">Belongs to the small GTPase superfamily. Rab family.</text>
</comment>
<feature type="chain" id="PRO_0000121263" description="Rab-like protein 2A">
    <location>
        <begin position="1"/>
        <end position="228"/>
    </location>
</feature>
<feature type="region of interest" description="Disordered" evidence="3">
    <location>
        <begin position="200"/>
        <end position="228"/>
    </location>
</feature>
<feature type="binding site" evidence="1">
    <location>
        <begin position="28"/>
        <end position="35"/>
    </location>
    <ligand>
        <name>GTP</name>
        <dbReference type="ChEBI" id="CHEBI:37565"/>
    </ligand>
</feature>
<feature type="binding site" evidence="1">
    <location>
        <begin position="76"/>
        <end position="80"/>
    </location>
    <ligand>
        <name>GTP</name>
        <dbReference type="ChEBI" id="CHEBI:37565"/>
    </ligand>
</feature>
<feature type="binding site" evidence="1">
    <location>
        <begin position="133"/>
        <end position="136"/>
    </location>
    <ligand>
        <name>GTP</name>
        <dbReference type="ChEBI" id="CHEBI:37565"/>
    </ligand>
</feature>
<feature type="splice variant" id="VSP_005531" description="In isoform 2." evidence="5">
    <original>D</original>
    <variation>DA</variation>
    <location>
        <position position="136"/>
    </location>
</feature>
<feature type="splice variant" id="VSP_041060" description="In isoform 3." evidence="5">
    <original>K</original>
    <variation>KVWLTAEVASK</variation>
    <location>
        <position position="168"/>
    </location>
</feature>
<name>RBL2A_HUMAN</name>
<evidence type="ECO:0000250" key="1"/>
<evidence type="ECO:0000250" key="2">
    <source>
        <dbReference type="UniProtKB" id="E9Q9D5"/>
    </source>
</evidence>
<evidence type="ECO:0000256" key="3">
    <source>
        <dbReference type="SAM" id="MobiDB-lite"/>
    </source>
</evidence>
<evidence type="ECO:0000269" key="4">
    <source>
    </source>
</evidence>
<evidence type="ECO:0000305" key="5"/>